<comment type="function">
    <text evidence="1">Phosphorolytic 3'-5' exoribonuclease that plays an important role in tRNA 3'-end maturation. Removes nucleotide residues following the 3'-CCA terminus of tRNAs; can also add nucleotides to the ends of RNA molecules by using nucleoside diphosphates as substrates, but this may not be physiologically important. Probably plays a role in initiation of 16S rRNA degradation (leading to ribosome degradation) during starvation.</text>
</comment>
<comment type="catalytic activity">
    <reaction evidence="1">
        <text>tRNA(n+1) + phosphate = tRNA(n) + a ribonucleoside 5'-diphosphate</text>
        <dbReference type="Rhea" id="RHEA:10628"/>
        <dbReference type="Rhea" id="RHEA-COMP:17343"/>
        <dbReference type="Rhea" id="RHEA-COMP:17344"/>
        <dbReference type="ChEBI" id="CHEBI:43474"/>
        <dbReference type="ChEBI" id="CHEBI:57930"/>
        <dbReference type="ChEBI" id="CHEBI:173114"/>
        <dbReference type="EC" id="2.7.7.56"/>
    </reaction>
</comment>
<comment type="subunit">
    <text evidence="1">Homohexameric ring arranged as a trimer of dimers.</text>
</comment>
<comment type="similarity">
    <text evidence="1">Belongs to the RNase PH family.</text>
</comment>
<protein>
    <recommendedName>
        <fullName evidence="1">Ribonuclease PH</fullName>
        <shortName evidence="1">RNase PH</shortName>
        <ecNumber evidence="1">2.7.7.56</ecNumber>
    </recommendedName>
    <alternativeName>
        <fullName evidence="1">tRNA nucleotidyltransferase</fullName>
    </alternativeName>
</protein>
<reference key="1">
    <citation type="submission" date="2007-05" db="EMBL/GenBank/DDBJ databases">
        <title>Complete sequence of Pseudomonas putida F1.</title>
        <authorList>
            <consortium name="US DOE Joint Genome Institute"/>
            <person name="Copeland A."/>
            <person name="Lucas S."/>
            <person name="Lapidus A."/>
            <person name="Barry K."/>
            <person name="Detter J.C."/>
            <person name="Glavina del Rio T."/>
            <person name="Hammon N."/>
            <person name="Israni S."/>
            <person name="Dalin E."/>
            <person name="Tice H."/>
            <person name="Pitluck S."/>
            <person name="Chain P."/>
            <person name="Malfatti S."/>
            <person name="Shin M."/>
            <person name="Vergez L."/>
            <person name="Schmutz J."/>
            <person name="Larimer F."/>
            <person name="Land M."/>
            <person name="Hauser L."/>
            <person name="Kyrpides N."/>
            <person name="Lykidis A."/>
            <person name="Parales R."/>
            <person name="Richardson P."/>
        </authorList>
    </citation>
    <scope>NUCLEOTIDE SEQUENCE [LARGE SCALE GENOMIC DNA]</scope>
    <source>
        <strain>ATCC 700007 / DSM 6899 / JCM 31910 / BCRC 17059 / LMG 24140 / F1</strain>
    </source>
</reference>
<evidence type="ECO:0000255" key="1">
    <source>
        <dbReference type="HAMAP-Rule" id="MF_00564"/>
    </source>
</evidence>
<gene>
    <name evidence="1" type="primary">rph</name>
    <name type="ordered locus">Pput_5202</name>
</gene>
<dbReference type="EC" id="2.7.7.56" evidence="1"/>
<dbReference type="EMBL" id="CP000712">
    <property type="protein sequence ID" value="ABQ81320.1"/>
    <property type="molecule type" value="Genomic_DNA"/>
</dbReference>
<dbReference type="SMR" id="A5WB10"/>
<dbReference type="KEGG" id="ppf:Pput_5202"/>
<dbReference type="eggNOG" id="COG0689">
    <property type="taxonomic scope" value="Bacteria"/>
</dbReference>
<dbReference type="HOGENOM" id="CLU_050858_0_0_6"/>
<dbReference type="GO" id="GO:0000175">
    <property type="term" value="F:3'-5'-RNA exonuclease activity"/>
    <property type="evidence" value="ECO:0007669"/>
    <property type="project" value="UniProtKB-UniRule"/>
</dbReference>
<dbReference type="GO" id="GO:0000049">
    <property type="term" value="F:tRNA binding"/>
    <property type="evidence" value="ECO:0007669"/>
    <property type="project" value="UniProtKB-UniRule"/>
</dbReference>
<dbReference type="GO" id="GO:0009022">
    <property type="term" value="F:tRNA nucleotidyltransferase activity"/>
    <property type="evidence" value="ECO:0007669"/>
    <property type="project" value="UniProtKB-UniRule"/>
</dbReference>
<dbReference type="GO" id="GO:0016075">
    <property type="term" value="P:rRNA catabolic process"/>
    <property type="evidence" value="ECO:0007669"/>
    <property type="project" value="UniProtKB-UniRule"/>
</dbReference>
<dbReference type="GO" id="GO:0006364">
    <property type="term" value="P:rRNA processing"/>
    <property type="evidence" value="ECO:0007669"/>
    <property type="project" value="UniProtKB-KW"/>
</dbReference>
<dbReference type="GO" id="GO:0008033">
    <property type="term" value="P:tRNA processing"/>
    <property type="evidence" value="ECO:0007669"/>
    <property type="project" value="UniProtKB-UniRule"/>
</dbReference>
<dbReference type="CDD" id="cd11362">
    <property type="entry name" value="RNase_PH_bact"/>
    <property type="match status" value="1"/>
</dbReference>
<dbReference type="FunFam" id="3.30.230.70:FF:000003">
    <property type="entry name" value="Ribonuclease PH"/>
    <property type="match status" value="1"/>
</dbReference>
<dbReference type="Gene3D" id="3.30.230.70">
    <property type="entry name" value="GHMP Kinase, N-terminal domain"/>
    <property type="match status" value="1"/>
</dbReference>
<dbReference type="HAMAP" id="MF_00564">
    <property type="entry name" value="RNase_PH"/>
    <property type="match status" value="1"/>
</dbReference>
<dbReference type="InterPro" id="IPR001247">
    <property type="entry name" value="ExoRNase_PH_dom1"/>
</dbReference>
<dbReference type="InterPro" id="IPR015847">
    <property type="entry name" value="ExoRNase_PH_dom2"/>
</dbReference>
<dbReference type="InterPro" id="IPR036345">
    <property type="entry name" value="ExoRNase_PH_dom2_sf"/>
</dbReference>
<dbReference type="InterPro" id="IPR027408">
    <property type="entry name" value="PNPase/RNase_PH_dom_sf"/>
</dbReference>
<dbReference type="InterPro" id="IPR020568">
    <property type="entry name" value="Ribosomal_Su5_D2-typ_SF"/>
</dbReference>
<dbReference type="InterPro" id="IPR050080">
    <property type="entry name" value="RNase_PH"/>
</dbReference>
<dbReference type="InterPro" id="IPR002381">
    <property type="entry name" value="RNase_PH_bac-type"/>
</dbReference>
<dbReference type="InterPro" id="IPR018336">
    <property type="entry name" value="RNase_PH_CS"/>
</dbReference>
<dbReference type="NCBIfam" id="TIGR01966">
    <property type="entry name" value="RNasePH"/>
    <property type="match status" value="1"/>
</dbReference>
<dbReference type="PANTHER" id="PTHR11953">
    <property type="entry name" value="EXOSOME COMPLEX COMPONENT"/>
    <property type="match status" value="1"/>
</dbReference>
<dbReference type="PANTHER" id="PTHR11953:SF0">
    <property type="entry name" value="EXOSOME COMPLEX COMPONENT RRP41"/>
    <property type="match status" value="1"/>
</dbReference>
<dbReference type="Pfam" id="PF01138">
    <property type="entry name" value="RNase_PH"/>
    <property type="match status" value="1"/>
</dbReference>
<dbReference type="Pfam" id="PF03725">
    <property type="entry name" value="RNase_PH_C"/>
    <property type="match status" value="1"/>
</dbReference>
<dbReference type="SUPFAM" id="SSF55666">
    <property type="entry name" value="Ribonuclease PH domain 2-like"/>
    <property type="match status" value="1"/>
</dbReference>
<dbReference type="SUPFAM" id="SSF54211">
    <property type="entry name" value="Ribosomal protein S5 domain 2-like"/>
    <property type="match status" value="1"/>
</dbReference>
<dbReference type="PROSITE" id="PS01277">
    <property type="entry name" value="RIBONUCLEASE_PH"/>
    <property type="match status" value="1"/>
</dbReference>
<name>RNPH_PSEP1</name>
<keyword id="KW-0548">Nucleotidyltransferase</keyword>
<keyword id="KW-0694">RNA-binding</keyword>
<keyword id="KW-0698">rRNA processing</keyword>
<keyword id="KW-0808">Transferase</keyword>
<keyword id="KW-0819">tRNA processing</keyword>
<keyword id="KW-0820">tRNA-binding</keyword>
<feature type="chain" id="PRO_1000024852" description="Ribonuclease PH">
    <location>
        <begin position="1"/>
        <end position="240"/>
    </location>
</feature>
<feature type="binding site" evidence="1">
    <location>
        <position position="87"/>
    </location>
    <ligand>
        <name>phosphate</name>
        <dbReference type="ChEBI" id="CHEBI:43474"/>
        <note>substrate</note>
    </ligand>
</feature>
<feature type="binding site" evidence="1">
    <location>
        <begin position="125"/>
        <end position="127"/>
    </location>
    <ligand>
        <name>phosphate</name>
        <dbReference type="ChEBI" id="CHEBI:43474"/>
        <note>substrate</note>
    </ligand>
</feature>
<sequence>MKRPSGRVADQLRSIRITRNYTKHAEGSVLVEFGDTKVICTVSVENGVPRFLKGQGQGWLTAEYGMLPRSTGERNQREASRGKQGGRTLEIQRLIGRSLRAALDMSKLGDITLYVDCDVIQADGGTRTASITGAMVALCDALAVIKKRGGLKGGNPLKHMIAAVSVGMYQGEAVLDLDYLEDSAAETDLNVVMTSAGGFIEVQGTAEGAPFQPEDFNAMLALAQKGMNEIFELQQAALAD</sequence>
<organism>
    <name type="scientific">Pseudomonas putida (strain ATCC 700007 / DSM 6899 / JCM 31910 / BCRC 17059 / LMG 24140 / F1)</name>
    <dbReference type="NCBI Taxonomy" id="351746"/>
    <lineage>
        <taxon>Bacteria</taxon>
        <taxon>Pseudomonadati</taxon>
        <taxon>Pseudomonadota</taxon>
        <taxon>Gammaproteobacteria</taxon>
        <taxon>Pseudomonadales</taxon>
        <taxon>Pseudomonadaceae</taxon>
        <taxon>Pseudomonas</taxon>
    </lineage>
</organism>
<proteinExistence type="inferred from homology"/>
<accession>A5WB10</accession>